<protein>
    <recommendedName>
        <fullName>Transketolase 2</fullName>
        <shortName>TK 2</shortName>
        <ecNumber>2.2.1.1</ecNumber>
    </recommendedName>
</protein>
<dbReference type="EC" id="2.2.1.1"/>
<dbReference type="EMBL" id="CP000021">
    <property type="protein sequence ID" value="AAW87756.1"/>
    <property type="molecule type" value="Genomic_DNA"/>
</dbReference>
<dbReference type="RefSeq" id="WP_011263520.1">
    <property type="nucleotide sequence ID" value="NC_006841.2"/>
</dbReference>
<dbReference type="RefSeq" id="YP_206644.1">
    <property type="nucleotide sequence ID" value="NC_006841.2"/>
</dbReference>
<dbReference type="SMR" id="Q5DZP0"/>
<dbReference type="STRING" id="312309.VF_A0686"/>
<dbReference type="EnsemblBacteria" id="AAW87756">
    <property type="protein sequence ID" value="AAW87756"/>
    <property type="gene ID" value="VF_A0686"/>
</dbReference>
<dbReference type="GeneID" id="54166005"/>
<dbReference type="KEGG" id="vfi:VF_A0686"/>
<dbReference type="PATRIC" id="fig|312309.11.peg.3288"/>
<dbReference type="eggNOG" id="COG0021">
    <property type="taxonomic scope" value="Bacteria"/>
</dbReference>
<dbReference type="HOGENOM" id="CLU_009227_0_0_6"/>
<dbReference type="OrthoDB" id="8732661at2"/>
<dbReference type="Proteomes" id="UP000000537">
    <property type="component" value="Chromosome II"/>
</dbReference>
<dbReference type="GO" id="GO:0005829">
    <property type="term" value="C:cytosol"/>
    <property type="evidence" value="ECO:0007669"/>
    <property type="project" value="TreeGrafter"/>
</dbReference>
<dbReference type="GO" id="GO:0046872">
    <property type="term" value="F:metal ion binding"/>
    <property type="evidence" value="ECO:0007669"/>
    <property type="project" value="UniProtKB-KW"/>
</dbReference>
<dbReference type="GO" id="GO:0004802">
    <property type="term" value="F:transketolase activity"/>
    <property type="evidence" value="ECO:0007669"/>
    <property type="project" value="UniProtKB-EC"/>
</dbReference>
<dbReference type="GO" id="GO:0006098">
    <property type="term" value="P:pentose-phosphate shunt"/>
    <property type="evidence" value="ECO:0007669"/>
    <property type="project" value="TreeGrafter"/>
</dbReference>
<dbReference type="CDD" id="cd07033">
    <property type="entry name" value="TPP_PYR_DXS_TK_like"/>
    <property type="match status" value="1"/>
</dbReference>
<dbReference type="CDD" id="cd02012">
    <property type="entry name" value="TPP_TK"/>
    <property type="match status" value="1"/>
</dbReference>
<dbReference type="FunFam" id="3.40.50.920:FF:000003">
    <property type="entry name" value="Transketolase"/>
    <property type="match status" value="1"/>
</dbReference>
<dbReference type="FunFam" id="3.40.50.970:FF:000003">
    <property type="entry name" value="Transketolase"/>
    <property type="match status" value="1"/>
</dbReference>
<dbReference type="FunFam" id="3.40.50.970:FF:000004">
    <property type="entry name" value="Transketolase"/>
    <property type="match status" value="1"/>
</dbReference>
<dbReference type="Gene3D" id="3.40.50.920">
    <property type="match status" value="1"/>
</dbReference>
<dbReference type="Gene3D" id="3.40.50.970">
    <property type="match status" value="2"/>
</dbReference>
<dbReference type="InterPro" id="IPR029061">
    <property type="entry name" value="THDP-binding"/>
</dbReference>
<dbReference type="InterPro" id="IPR009014">
    <property type="entry name" value="Transketo_C/PFOR_II"/>
</dbReference>
<dbReference type="InterPro" id="IPR055152">
    <property type="entry name" value="Transketolase-like_C_2"/>
</dbReference>
<dbReference type="InterPro" id="IPR005475">
    <property type="entry name" value="Transketolase-like_Pyr-bd"/>
</dbReference>
<dbReference type="InterPro" id="IPR005478">
    <property type="entry name" value="Transketolase_bac-like"/>
</dbReference>
<dbReference type="InterPro" id="IPR020826">
    <property type="entry name" value="Transketolase_BS"/>
</dbReference>
<dbReference type="InterPro" id="IPR049557">
    <property type="entry name" value="Transketolase_CS"/>
</dbReference>
<dbReference type="InterPro" id="IPR033247">
    <property type="entry name" value="Transketolase_fam"/>
</dbReference>
<dbReference type="InterPro" id="IPR005474">
    <property type="entry name" value="Transketolase_N"/>
</dbReference>
<dbReference type="NCBIfam" id="TIGR00232">
    <property type="entry name" value="tktlase_bact"/>
    <property type="match status" value="1"/>
</dbReference>
<dbReference type="PANTHER" id="PTHR43522">
    <property type="entry name" value="TRANSKETOLASE"/>
    <property type="match status" value="1"/>
</dbReference>
<dbReference type="PANTHER" id="PTHR43522:SF2">
    <property type="entry name" value="TRANSKETOLASE 1-RELATED"/>
    <property type="match status" value="1"/>
</dbReference>
<dbReference type="Pfam" id="PF02779">
    <property type="entry name" value="Transket_pyr"/>
    <property type="match status" value="1"/>
</dbReference>
<dbReference type="Pfam" id="PF22613">
    <property type="entry name" value="Transketolase_C_1"/>
    <property type="match status" value="1"/>
</dbReference>
<dbReference type="Pfam" id="PF00456">
    <property type="entry name" value="Transketolase_N"/>
    <property type="match status" value="1"/>
</dbReference>
<dbReference type="SMART" id="SM00861">
    <property type="entry name" value="Transket_pyr"/>
    <property type="match status" value="1"/>
</dbReference>
<dbReference type="SUPFAM" id="SSF52518">
    <property type="entry name" value="Thiamin diphosphate-binding fold (THDP-binding)"/>
    <property type="match status" value="2"/>
</dbReference>
<dbReference type="SUPFAM" id="SSF52922">
    <property type="entry name" value="TK C-terminal domain-like"/>
    <property type="match status" value="1"/>
</dbReference>
<dbReference type="PROSITE" id="PS00801">
    <property type="entry name" value="TRANSKETOLASE_1"/>
    <property type="match status" value="1"/>
</dbReference>
<dbReference type="PROSITE" id="PS00802">
    <property type="entry name" value="TRANSKETOLASE_2"/>
    <property type="match status" value="1"/>
</dbReference>
<gene>
    <name type="primary">tkt2</name>
    <name type="ordered locus">VF_A0686</name>
</gene>
<comment type="function">
    <text evidence="1">Catalyzes the transfer of a two-carbon ketol group from a ketose donor to an aldose acceptor, via a covalent intermediate with the cofactor thiamine pyrophosphate.</text>
</comment>
<comment type="catalytic activity">
    <reaction>
        <text>D-sedoheptulose 7-phosphate + D-glyceraldehyde 3-phosphate = aldehydo-D-ribose 5-phosphate + D-xylulose 5-phosphate</text>
        <dbReference type="Rhea" id="RHEA:10508"/>
        <dbReference type="ChEBI" id="CHEBI:57483"/>
        <dbReference type="ChEBI" id="CHEBI:57737"/>
        <dbReference type="ChEBI" id="CHEBI:58273"/>
        <dbReference type="ChEBI" id="CHEBI:59776"/>
        <dbReference type="EC" id="2.2.1.1"/>
    </reaction>
</comment>
<comment type="cofactor">
    <cofactor evidence="1">
        <name>Mg(2+)</name>
        <dbReference type="ChEBI" id="CHEBI:18420"/>
    </cofactor>
    <cofactor evidence="1">
        <name>Ca(2+)</name>
        <dbReference type="ChEBI" id="CHEBI:29108"/>
    </cofactor>
    <cofactor evidence="1">
        <name>Mn(2+)</name>
        <dbReference type="ChEBI" id="CHEBI:29035"/>
    </cofactor>
    <cofactor evidence="1">
        <name>Co(2+)</name>
        <dbReference type="ChEBI" id="CHEBI:48828"/>
    </cofactor>
    <text evidence="1">Binds 1 Mg(2+) ion per subunit. Can also utilize other divalent metal cations, such as Ca(2+), Mn(2+) and Co(2+).</text>
</comment>
<comment type="cofactor">
    <cofactor evidence="1">
        <name>thiamine diphosphate</name>
        <dbReference type="ChEBI" id="CHEBI:58937"/>
    </cofactor>
    <text evidence="1">Binds 1 thiamine pyrophosphate per subunit.</text>
</comment>
<comment type="subunit">
    <text evidence="1">Homodimer.</text>
</comment>
<comment type="similarity">
    <text evidence="2">Belongs to the transketolase family.</text>
</comment>
<proteinExistence type="inferred from homology"/>
<accession>Q5DZP0</accession>
<evidence type="ECO:0000250" key="1"/>
<evidence type="ECO:0000305" key="2"/>
<name>TKT2_ALIF1</name>
<organism>
    <name type="scientific">Aliivibrio fischeri (strain ATCC 700601 / ES114)</name>
    <name type="common">Vibrio fischeri</name>
    <dbReference type="NCBI Taxonomy" id="312309"/>
    <lineage>
        <taxon>Bacteria</taxon>
        <taxon>Pseudomonadati</taxon>
        <taxon>Pseudomonadota</taxon>
        <taxon>Gammaproteobacteria</taxon>
        <taxon>Vibrionales</taxon>
        <taxon>Vibrionaceae</taxon>
        <taxon>Aliivibrio</taxon>
    </lineage>
</organism>
<reference key="1">
    <citation type="journal article" date="2005" name="Proc. Natl. Acad. Sci. U.S.A.">
        <title>Complete genome sequence of Vibrio fischeri: a symbiotic bacterium with pathogenic congeners.</title>
        <authorList>
            <person name="Ruby E.G."/>
            <person name="Urbanowski M."/>
            <person name="Campbell J."/>
            <person name="Dunn A."/>
            <person name="Faini M."/>
            <person name="Gunsalus R."/>
            <person name="Lostroh P."/>
            <person name="Lupp C."/>
            <person name="McCann J."/>
            <person name="Millikan D."/>
            <person name="Schaefer A."/>
            <person name="Stabb E."/>
            <person name="Stevens A."/>
            <person name="Visick K."/>
            <person name="Whistler C."/>
            <person name="Greenberg E.P."/>
        </authorList>
    </citation>
    <scope>NUCLEOTIDE SEQUENCE [LARGE SCALE GENOMIC DNA]</scope>
    <source>
        <strain>ATCC 700601 / ES114</strain>
    </source>
</reference>
<keyword id="KW-0106">Calcium</keyword>
<keyword id="KW-0460">Magnesium</keyword>
<keyword id="KW-0479">Metal-binding</keyword>
<keyword id="KW-1185">Reference proteome</keyword>
<keyword id="KW-0786">Thiamine pyrophosphate</keyword>
<keyword id="KW-0808">Transferase</keyword>
<sequence>MNRKHLANAIRALSMDGVQQANSGHPGAPMGMADIAEVLWRSHLNHNPANPEWADRDRFILSNGHGSMLIYSLLHLSGYELSIDDLKNFRQLHSKTPGHPEYGYAPGVETTTGPLGQGITNAVGMAMAEKALAAQFNKEGHDIVDHFTYTFMGDGCLMEGISHEACSLAGTLGLGKLIAFWDDNGISIDGEVEGWFSDDTPKRFEAYGWHVIPAVDGHDSDAINAAIEAAKADPRPTLICTKTIIGFGSPNKQGTHDCHGAPLGADEIKAAKAQLGWEHGAFEIPQEVYAEWDAKETGAAKEASWNEKFAAYEAAYPELAAEFTRRVNGDLPKEWEEKASAIIADLQANPANIASRKASQNALEAFGAMLPEFMGGSADLAPSNLTMWSGSKSLEANDFSGNYIHYGVREFGMTAIMNGIALHGGFVPYGATFLMFMEYARNAMRMAALMKVQNIQVYTHDSIGLGEDGPTHQPVEQIASLRLTPNMSTWRPCDQVESAVAWKLAIERKDGPSALIFSRQNLAQQERDAKQLANIAKGGYILKDCEGQPELILIATGSEVELAIEAAAQLTAEGKAVRVVSMPSTDAFDKQDEAYREAVLPSAVTKRIAIEAGIADFWYKYVGFGGKIIGMTTFGESAPADELFKMFGFTTENVVNTAKELLA</sequence>
<feature type="chain" id="PRO_0000191883" description="Transketolase 2">
    <location>
        <begin position="1"/>
        <end position="663"/>
    </location>
</feature>
<feature type="active site" description="Proton donor" evidence="1">
    <location>
        <position position="410"/>
    </location>
</feature>
<feature type="binding site" evidence="1">
    <location>
        <position position="25"/>
    </location>
    <ligand>
        <name>substrate</name>
    </ligand>
</feature>
<feature type="binding site" evidence="1">
    <location>
        <position position="65"/>
    </location>
    <ligand>
        <name>thiamine diphosphate</name>
        <dbReference type="ChEBI" id="CHEBI:58937"/>
    </ligand>
</feature>
<feature type="binding site" evidence="1">
    <location>
        <begin position="113"/>
        <end position="115"/>
    </location>
    <ligand>
        <name>thiamine diphosphate</name>
        <dbReference type="ChEBI" id="CHEBI:58937"/>
    </ligand>
</feature>
<feature type="binding site" evidence="1">
    <location>
        <position position="154"/>
    </location>
    <ligand>
        <name>Mg(2+)</name>
        <dbReference type="ChEBI" id="CHEBI:18420"/>
    </ligand>
</feature>
<feature type="binding site" evidence="1">
    <location>
        <position position="155"/>
    </location>
    <ligand>
        <name>thiamine diphosphate</name>
        <dbReference type="ChEBI" id="CHEBI:58937"/>
    </ligand>
</feature>
<feature type="binding site" evidence="1">
    <location>
        <position position="184"/>
    </location>
    <ligand>
        <name>Mg(2+)</name>
        <dbReference type="ChEBI" id="CHEBI:18420"/>
    </ligand>
</feature>
<feature type="binding site" evidence="1">
    <location>
        <position position="184"/>
    </location>
    <ligand>
        <name>thiamine diphosphate</name>
        <dbReference type="ChEBI" id="CHEBI:58937"/>
    </ligand>
</feature>
<feature type="binding site" evidence="1">
    <location>
        <position position="186"/>
    </location>
    <ligand>
        <name>Mg(2+)</name>
        <dbReference type="ChEBI" id="CHEBI:18420"/>
    </ligand>
</feature>
<feature type="binding site" evidence="1">
    <location>
        <position position="259"/>
    </location>
    <ligand>
        <name>substrate</name>
    </ligand>
</feature>
<feature type="binding site" evidence="1">
    <location>
        <position position="259"/>
    </location>
    <ligand>
        <name>thiamine diphosphate</name>
        <dbReference type="ChEBI" id="CHEBI:58937"/>
    </ligand>
</feature>
<feature type="binding site" evidence="1">
    <location>
        <position position="356"/>
    </location>
    <ligand>
        <name>substrate</name>
    </ligand>
</feature>
<feature type="binding site" evidence="1">
    <location>
        <position position="383"/>
    </location>
    <ligand>
        <name>substrate</name>
    </ligand>
</feature>
<feature type="binding site" evidence="1">
    <location>
        <position position="436"/>
    </location>
    <ligand>
        <name>thiamine diphosphate</name>
        <dbReference type="ChEBI" id="CHEBI:58937"/>
    </ligand>
</feature>
<feature type="binding site" evidence="1">
    <location>
        <position position="460"/>
    </location>
    <ligand>
        <name>substrate</name>
    </ligand>
</feature>
<feature type="binding site" evidence="1">
    <location>
        <position position="468"/>
    </location>
    <ligand>
        <name>substrate</name>
    </ligand>
</feature>
<feature type="binding site" evidence="1">
    <location>
        <position position="519"/>
    </location>
    <ligand>
        <name>substrate</name>
    </ligand>
</feature>
<feature type="site" description="Important for catalytic activity" evidence="1">
    <location>
        <position position="25"/>
    </location>
</feature>
<feature type="site" description="Important for catalytic activity" evidence="1">
    <location>
        <position position="259"/>
    </location>
</feature>